<protein>
    <recommendedName>
        <fullName evidence="1">Erythronate-4-phosphate dehydrogenase</fullName>
        <ecNumber evidence="1">1.1.1.290</ecNumber>
    </recommendedName>
</protein>
<organism>
    <name type="scientific">Shewanella baltica (strain OS223)</name>
    <dbReference type="NCBI Taxonomy" id="407976"/>
    <lineage>
        <taxon>Bacteria</taxon>
        <taxon>Pseudomonadati</taxon>
        <taxon>Pseudomonadota</taxon>
        <taxon>Gammaproteobacteria</taxon>
        <taxon>Alteromonadales</taxon>
        <taxon>Shewanellaceae</taxon>
        <taxon>Shewanella</taxon>
    </lineage>
</organism>
<keyword id="KW-0963">Cytoplasm</keyword>
<keyword id="KW-0520">NAD</keyword>
<keyword id="KW-0560">Oxidoreductase</keyword>
<keyword id="KW-0664">Pyridoxine biosynthesis</keyword>
<comment type="function">
    <text evidence="1">Catalyzes the oxidation of erythronate-4-phosphate to 3-hydroxy-2-oxo-4-phosphonooxybutanoate.</text>
</comment>
<comment type="catalytic activity">
    <reaction evidence="1">
        <text>4-phospho-D-erythronate + NAD(+) = (R)-3-hydroxy-2-oxo-4-phosphooxybutanoate + NADH + H(+)</text>
        <dbReference type="Rhea" id="RHEA:18829"/>
        <dbReference type="ChEBI" id="CHEBI:15378"/>
        <dbReference type="ChEBI" id="CHEBI:57540"/>
        <dbReference type="ChEBI" id="CHEBI:57945"/>
        <dbReference type="ChEBI" id="CHEBI:58538"/>
        <dbReference type="ChEBI" id="CHEBI:58766"/>
        <dbReference type="EC" id="1.1.1.290"/>
    </reaction>
</comment>
<comment type="pathway">
    <text evidence="1">Cofactor biosynthesis; pyridoxine 5'-phosphate biosynthesis; pyridoxine 5'-phosphate from D-erythrose 4-phosphate: step 2/5.</text>
</comment>
<comment type="subunit">
    <text evidence="1">Homodimer.</text>
</comment>
<comment type="subcellular location">
    <subcellularLocation>
        <location evidence="1">Cytoplasm</location>
    </subcellularLocation>
</comment>
<comment type="similarity">
    <text evidence="1">Belongs to the D-isomer specific 2-hydroxyacid dehydrogenase family. PdxB subfamily.</text>
</comment>
<name>PDXB_SHEB2</name>
<dbReference type="EC" id="1.1.1.290" evidence="1"/>
<dbReference type="EMBL" id="CP001252">
    <property type="protein sequence ID" value="ACK46119.1"/>
    <property type="molecule type" value="Genomic_DNA"/>
</dbReference>
<dbReference type="RefSeq" id="WP_012587330.1">
    <property type="nucleotide sequence ID" value="NC_011663.1"/>
</dbReference>
<dbReference type="SMR" id="B8EEB4"/>
<dbReference type="KEGG" id="sbp:Sbal223_1614"/>
<dbReference type="HOGENOM" id="CLU_019796_4_0_6"/>
<dbReference type="UniPathway" id="UPA00244">
    <property type="reaction ID" value="UER00310"/>
</dbReference>
<dbReference type="Proteomes" id="UP000002507">
    <property type="component" value="Chromosome"/>
</dbReference>
<dbReference type="GO" id="GO:0005737">
    <property type="term" value="C:cytoplasm"/>
    <property type="evidence" value="ECO:0007669"/>
    <property type="project" value="UniProtKB-SubCell"/>
</dbReference>
<dbReference type="GO" id="GO:0033711">
    <property type="term" value="F:4-phosphoerythronate dehydrogenase activity"/>
    <property type="evidence" value="ECO:0007669"/>
    <property type="project" value="UniProtKB-EC"/>
</dbReference>
<dbReference type="GO" id="GO:0051287">
    <property type="term" value="F:NAD binding"/>
    <property type="evidence" value="ECO:0007669"/>
    <property type="project" value="InterPro"/>
</dbReference>
<dbReference type="GO" id="GO:0046983">
    <property type="term" value="F:protein dimerization activity"/>
    <property type="evidence" value="ECO:0007669"/>
    <property type="project" value="InterPro"/>
</dbReference>
<dbReference type="GO" id="GO:0008615">
    <property type="term" value="P:pyridoxine biosynthetic process"/>
    <property type="evidence" value="ECO:0007669"/>
    <property type="project" value="UniProtKB-UniRule"/>
</dbReference>
<dbReference type="CDD" id="cd12158">
    <property type="entry name" value="ErythrP_dh"/>
    <property type="match status" value="1"/>
</dbReference>
<dbReference type="FunFam" id="3.40.50.720:FF:000890">
    <property type="entry name" value="Erythronate-4-phosphate dehydrogenase"/>
    <property type="match status" value="1"/>
</dbReference>
<dbReference type="Gene3D" id="3.30.1370.170">
    <property type="match status" value="1"/>
</dbReference>
<dbReference type="Gene3D" id="3.40.50.720">
    <property type="entry name" value="NAD(P)-binding Rossmann-like Domain"/>
    <property type="match status" value="2"/>
</dbReference>
<dbReference type="HAMAP" id="MF_01825">
    <property type="entry name" value="PdxB"/>
    <property type="match status" value="1"/>
</dbReference>
<dbReference type="InterPro" id="IPR050418">
    <property type="entry name" value="D-iso_2-hydroxyacid_DH_PdxB"/>
</dbReference>
<dbReference type="InterPro" id="IPR006139">
    <property type="entry name" value="D-isomer_2_OHA_DH_cat_dom"/>
</dbReference>
<dbReference type="InterPro" id="IPR029753">
    <property type="entry name" value="D-isomer_DH_CS"/>
</dbReference>
<dbReference type="InterPro" id="IPR006140">
    <property type="entry name" value="D-isomer_DH_NAD-bd"/>
</dbReference>
<dbReference type="InterPro" id="IPR020921">
    <property type="entry name" value="Erythronate-4-P_DHase"/>
</dbReference>
<dbReference type="InterPro" id="IPR024531">
    <property type="entry name" value="Erythronate-4-P_DHase_dimer"/>
</dbReference>
<dbReference type="InterPro" id="IPR036291">
    <property type="entry name" value="NAD(P)-bd_dom_sf"/>
</dbReference>
<dbReference type="InterPro" id="IPR038251">
    <property type="entry name" value="PdxB_dimer_sf"/>
</dbReference>
<dbReference type="PANTHER" id="PTHR43761:SF1">
    <property type="entry name" value="D-ISOMER SPECIFIC 2-HYDROXYACID DEHYDROGENASE CATALYTIC DOMAIN-CONTAINING PROTEIN-RELATED"/>
    <property type="match status" value="1"/>
</dbReference>
<dbReference type="PANTHER" id="PTHR43761">
    <property type="entry name" value="D-ISOMER SPECIFIC 2-HYDROXYACID DEHYDROGENASE FAMILY PROTEIN (AFU_ORTHOLOGUE AFUA_1G13630)"/>
    <property type="match status" value="1"/>
</dbReference>
<dbReference type="Pfam" id="PF00389">
    <property type="entry name" value="2-Hacid_dh"/>
    <property type="match status" value="1"/>
</dbReference>
<dbReference type="Pfam" id="PF02826">
    <property type="entry name" value="2-Hacid_dh_C"/>
    <property type="match status" value="1"/>
</dbReference>
<dbReference type="Pfam" id="PF11890">
    <property type="entry name" value="DUF3410"/>
    <property type="match status" value="1"/>
</dbReference>
<dbReference type="SUPFAM" id="SSF52283">
    <property type="entry name" value="Formate/glycerate dehydrogenase catalytic domain-like"/>
    <property type="match status" value="1"/>
</dbReference>
<dbReference type="SUPFAM" id="SSF51735">
    <property type="entry name" value="NAD(P)-binding Rossmann-fold domains"/>
    <property type="match status" value="1"/>
</dbReference>
<dbReference type="PROSITE" id="PS00671">
    <property type="entry name" value="D_2_HYDROXYACID_DH_3"/>
    <property type="match status" value="1"/>
</dbReference>
<gene>
    <name evidence="1" type="primary">pdxB</name>
    <name type="ordered locus">Sbal223_1614</name>
</gene>
<accession>B8EEB4</accession>
<sequence>MKILVDENMPYVEPLFGDLGDIIPVNGRTLTAEQVREADVLLVRSVTKVNAELLSGNNKLKFVGSATIGTDHVDLAYLAERNIPFSNAPGCNATAVGEFAFIAMLELAQRFNSPLKGKVVGIVGAGNTGTATAKCLQAYGIKVLLNDPIKAAEGDPRSFVSLDTIMAQADIISLHVPITHTGEHKTKHLFDEARLKALKPNTWLVNCCRGDVIDNQALIKVKQQRDDLKLVLDVWEGEPTPLPELVPLAEFATPHIAGYSLEGKARGTFMLYQNLCQLLNITADKSLLDLLPTFNIKAVELATAPNEKALLQLARFVYDLRDDDKMFRNTFLNENGFDTMRKNHQHRREFSALALAYDGQSEVDWLSNLGFSGVGQ</sequence>
<evidence type="ECO:0000255" key="1">
    <source>
        <dbReference type="HAMAP-Rule" id="MF_01825"/>
    </source>
</evidence>
<feature type="chain" id="PRO_1000188283" description="Erythronate-4-phosphate dehydrogenase">
    <location>
        <begin position="1"/>
        <end position="376"/>
    </location>
</feature>
<feature type="active site" evidence="1">
    <location>
        <position position="209"/>
    </location>
</feature>
<feature type="active site" evidence="1">
    <location>
        <position position="238"/>
    </location>
</feature>
<feature type="active site" description="Proton donor" evidence="1">
    <location>
        <position position="255"/>
    </location>
</feature>
<feature type="binding site" evidence="1">
    <location>
        <position position="45"/>
    </location>
    <ligand>
        <name>substrate</name>
    </ligand>
</feature>
<feature type="binding site" evidence="1">
    <location>
        <position position="67"/>
    </location>
    <ligand>
        <name>substrate</name>
    </ligand>
</feature>
<feature type="binding site" evidence="1">
    <location>
        <position position="147"/>
    </location>
    <ligand>
        <name>NAD(+)</name>
        <dbReference type="ChEBI" id="CHEBI:57540"/>
    </ligand>
</feature>
<feature type="binding site" evidence="1">
    <location>
        <position position="233"/>
    </location>
    <ligand>
        <name>NAD(+)</name>
        <dbReference type="ChEBI" id="CHEBI:57540"/>
    </ligand>
</feature>
<feature type="binding site" evidence="1">
    <location>
        <position position="258"/>
    </location>
    <ligand>
        <name>NAD(+)</name>
        <dbReference type="ChEBI" id="CHEBI:57540"/>
    </ligand>
</feature>
<feature type="binding site" evidence="1">
    <location>
        <position position="259"/>
    </location>
    <ligand>
        <name>substrate</name>
    </ligand>
</feature>
<proteinExistence type="inferred from homology"/>
<reference key="1">
    <citation type="submission" date="2008-12" db="EMBL/GenBank/DDBJ databases">
        <title>Complete sequence of chromosome of Shewanella baltica OS223.</title>
        <authorList>
            <consortium name="US DOE Joint Genome Institute"/>
            <person name="Lucas S."/>
            <person name="Copeland A."/>
            <person name="Lapidus A."/>
            <person name="Glavina del Rio T."/>
            <person name="Dalin E."/>
            <person name="Tice H."/>
            <person name="Bruce D."/>
            <person name="Goodwin L."/>
            <person name="Pitluck S."/>
            <person name="Chertkov O."/>
            <person name="Meincke L."/>
            <person name="Brettin T."/>
            <person name="Detter J.C."/>
            <person name="Han C."/>
            <person name="Kuske C.R."/>
            <person name="Larimer F."/>
            <person name="Land M."/>
            <person name="Hauser L."/>
            <person name="Kyrpides N."/>
            <person name="Ovchinnikova G."/>
            <person name="Brettar I."/>
            <person name="Rodrigues J."/>
            <person name="Konstantinidis K."/>
            <person name="Tiedje J."/>
        </authorList>
    </citation>
    <scope>NUCLEOTIDE SEQUENCE [LARGE SCALE GENOMIC DNA]</scope>
    <source>
        <strain>OS223</strain>
    </source>
</reference>